<comment type="function">
    <text evidence="1">DNA repair enzyme involved in the repair of deaminated bases. Selectively cleaves double-stranded DNA at the second phosphodiester bond 3' to a deoxyinosine leaving behind the intact lesion on the nicked DNA.</text>
</comment>
<comment type="catalytic activity">
    <reaction evidence="1">
        <text>Endonucleolytic cleavage at apurinic or apyrimidinic sites to products with a 5'-phosphate.</text>
        <dbReference type="EC" id="3.1.21.7"/>
    </reaction>
</comment>
<comment type="cofactor">
    <cofactor evidence="1">
        <name>Mg(2+)</name>
        <dbReference type="ChEBI" id="CHEBI:18420"/>
    </cofactor>
</comment>
<comment type="subcellular location">
    <subcellularLocation>
        <location evidence="1">Cytoplasm</location>
    </subcellularLocation>
</comment>
<comment type="similarity">
    <text evidence="1">Belongs to the endonuclease V family.</text>
</comment>
<accession>B1IUP9</accession>
<sequence length="223" mass="24673">MDLASLRAQQIELASSVIREDRLDKDPPDLIAGADVGFEQGGEVTRAAMVLLKYPSLELVEYKVARIATTMPYIPGFLSFREYPALLAAWEMLSQKPDLVFVDGHGISHPRRLGVASHFGLLVDVPTIGVAKKRLCGKFEPLSSEPGALAPLMDKGEQLAWVWRSKARCNPLFIATGHRVSVDSALAWVQRCMKGYRLPEPTRWADAVASERPAFVRYTANQP</sequence>
<keyword id="KW-0963">Cytoplasm</keyword>
<keyword id="KW-0227">DNA damage</keyword>
<keyword id="KW-0234">DNA repair</keyword>
<keyword id="KW-0255">Endonuclease</keyword>
<keyword id="KW-0378">Hydrolase</keyword>
<keyword id="KW-0460">Magnesium</keyword>
<keyword id="KW-0479">Metal-binding</keyword>
<keyword id="KW-0540">Nuclease</keyword>
<protein>
    <recommendedName>
        <fullName evidence="1">Endonuclease V</fullName>
        <ecNumber evidence="1">3.1.21.7</ecNumber>
    </recommendedName>
    <alternativeName>
        <fullName evidence="1">Deoxyinosine 3'endonuclease</fullName>
    </alternativeName>
    <alternativeName>
        <fullName evidence="1">Deoxyribonuclease V</fullName>
        <shortName evidence="1">DNase V</shortName>
    </alternativeName>
</protein>
<organism>
    <name type="scientific">Escherichia coli (strain ATCC 8739 / DSM 1576 / NBRC 3972 / NCIMB 8545 / WDCM 00012 / Crooks)</name>
    <dbReference type="NCBI Taxonomy" id="481805"/>
    <lineage>
        <taxon>Bacteria</taxon>
        <taxon>Pseudomonadati</taxon>
        <taxon>Pseudomonadota</taxon>
        <taxon>Gammaproteobacteria</taxon>
        <taxon>Enterobacterales</taxon>
        <taxon>Enterobacteriaceae</taxon>
        <taxon>Escherichia</taxon>
    </lineage>
</organism>
<name>NFI_ECOLC</name>
<reference key="1">
    <citation type="submission" date="2008-02" db="EMBL/GenBank/DDBJ databases">
        <title>Complete sequence of Escherichia coli C str. ATCC 8739.</title>
        <authorList>
            <person name="Copeland A."/>
            <person name="Lucas S."/>
            <person name="Lapidus A."/>
            <person name="Glavina del Rio T."/>
            <person name="Dalin E."/>
            <person name="Tice H."/>
            <person name="Bruce D."/>
            <person name="Goodwin L."/>
            <person name="Pitluck S."/>
            <person name="Kiss H."/>
            <person name="Brettin T."/>
            <person name="Detter J.C."/>
            <person name="Han C."/>
            <person name="Kuske C.R."/>
            <person name="Schmutz J."/>
            <person name="Larimer F."/>
            <person name="Land M."/>
            <person name="Hauser L."/>
            <person name="Kyrpides N."/>
            <person name="Mikhailova N."/>
            <person name="Ingram L."/>
            <person name="Richardson P."/>
        </authorList>
    </citation>
    <scope>NUCLEOTIDE SEQUENCE [LARGE SCALE GENOMIC DNA]</scope>
    <source>
        <strain>ATCC 8739 / DSM 1576 / NBRC 3972 / NCIMB 8545 / WDCM 00012 / Crooks</strain>
    </source>
</reference>
<dbReference type="EC" id="3.1.21.7" evidence="1"/>
<dbReference type="EMBL" id="CP000946">
    <property type="protein sequence ID" value="ACA79626.1"/>
    <property type="molecule type" value="Genomic_DNA"/>
</dbReference>
<dbReference type="RefSeq" id="WP_000362388.1">
    <property type="nucleotide sequence ID" value="NZ_MTFT01000025.1"/>
</dbReference>
<dbReference type="SMR" id="B1IUP9"/>
<dbReference type="GeneID" id="75169444"/>
<dbReference type="KEGG" id="ecl:EcolC_4027"/>
<dbReference type="HOGENOM" id="CLU_047631_1_0_6"/>
<dbReference type="GO" id="GO:0005737">
    <property type="term" value="C:cytoplasm"/>
    <property type="evidence" value="ECO:0007669"/>
    <property type="project" value="UniProtKB-SubCell"/>
</dbReference>
<dbReference type="GO" id="GO:0043737">
    <property type="term" value="F:deoxyribonuclease V activity"/>
    <property type="evidence" value="ECO:0007669"/>
    <property type="project" value="UniProtKB-UniRule"/>
</dbReference>
<dbReference type="GO" id="GO:0000287">
    <property type="term" value="F:magnesium ion binding"/>
    <property type="evidence" value="ECO:0007669"/>
    <property type="project" value="UniProtKB-UniRule"/>
</dbReference>
<dbReference type="GO" id="GO:0016891">
    <property type="term" value="F:RNA endonuclease activity, producing 5'-phosphomonoesters"/>
    <property type="evidence" value="ECO:0007669"/>
    <property type="project" value="TreeGrafter"/>
</dbReference>
<dbReference type="GO" id="GO:0003727">
    <property type="term" value="F:single-stranded RNA binding"/>
    <property type="evidence" value="ECO:0007669"/>
    <property type="project" value="TreeGrafter"/>
</dbReference>
<dbReference type="GO" id="GO:0006281">
    <property type="term" value="P:DNA repair"/>
    <property type="evidence" value="ECO:0007669"/>
    <property type="project" value="UniProtKB-UniRule"/>
</dbReference>
<dbReference type="CDD" id="cd06559">
    <property type="entry name" value="Endonuclease_V"/>
    <property type="match status" value="1"/>
</dbReference>
<dbReference type="FunFam" id="3.30.2170.10:FF:000001">
    <property type="entry name" value="Endonuclease V"/>
    <property type="match status" value="1"/>
</dbReference>
<dbReference type="Gene3D" id="3.30.2170.10">
    <property type="entry name" value="archaeoglobus fulgidus dsm 4304 superfamily"/>
    <property type="match status" value="1"/>
</dbReference>
<dbReference type="HAMAP" id="MF_00801">
    <property type="entry name" value="Endonuclease_5"/>
    <property type="match status" value="1"/>
</dbReference>
<dbReference type="InterPro" id="IPR007581">
    <property type="entry name" value="Endonuclease-V"/>
</dbReference>
<dbReference type="NCBIfam" id="NF008629">
    <property type="entry name" value="PRK11617.1"/>
    <property type="match status" value="1"/>
</dbReference>
<dbReference type="PANTHER" id="PTHR28511">
    <property type="entry name" value="ENDONUCLEASE V"/>
    <property type="match status" value="1"/>
</dbReference>
<dbReference type="PANTHER" id="PTHR28511:SF1">
    <property type="entry name" value="ENDONUCLEASE V"/>
    <property type="match status" value="1"/>
</dbReference>
<dbReference type="Pfam" id="PF04493">
    <property type="entry name" value="Endonuclease_5"/>
    <property type="match status" value="1"/>
</dbReference>
<evidence type="ECO:0000255" key="1">
    <source>
        <dbReference type="HAMAP-Rule" id="MF_00801"/>
    </source>
</evidence>
<feature type="chain" id="PRO_1000083694" description="Endonuclease V">
    <location>
        <begin position="1"/>
        <end position="223"/>
    </location>
</feature>
<feature type="binding site" evidence="1">
    <location>
        <position position="35"/>
    </location>
    <ligand>
        <name>Mg(2+)</name>
        <dbReference type="ChEBI" id="CHEBI:18420"/>
    </ligand>
</feature>
<feature type="binding site" evidence="1">
    <location>
        <position position="103"/>
    </location>
    <ligand>
        <name>Mg(2+)</name>
        <dbReference type="ChEBI" id="CHEBI:18420"/>
    </ligand>
</feature>
<feature type="site" description="Interaction with target DNA" evidence="1">
    <location>
        <position position="73"/>
    </location>
</feature>
<proteinExistence type="inferred from homology"/>
<gene>
    <name evidence="1" type="primary">nfi</name>
    <name type="ordered locus">EcolC_4027</name>
</gene>